<keyword id="KW-0067">ATP-binding</keyword>
<keyword id="KW-0227">DNA damage</keyword>
<keyword id="KW-0234">DNA repair</keyword>
<keyword id="KW-0238">DNA-binding</keyword>
<keyword id="KW-0547">Nucleotide-binding</keyword>
<keyword id="KW-1185">Reference proteome</keyword>
<proteinExistence type="inferred from homology"/>
<reference key="1">
    <citation type="journal article" date="2007" name="PLoS Genet.">
        <title>A tale of two oxidation states: bacterial colonization of arsenic-rich environments.</title>
        <authorList>
            <person name="Muller D."/>
            <person name="Medigue C."/>
            <person name="Koechler S."/>
            <person name="Barbe V."/>
            <person name="Barakat M."/>
            <person name="Talla E."/>
            <person name="Bonnefoy V."/>
            <person name="Krin E."/>
            <person name="Arsene-Ploetze F."/>
            <person name="Carapito C."/>
            <person name="Chandler M."/>
            <person name="Cournoyer B."/>
            <person name="Cruveiller S."/>
            <person name="Dossat C."/>
            <person name="Duval S."/>
            <person name="Heymann M."/>
            <person name="Leize E."/>
            <person name="Lieutaud A."/>
            <person name="Lievremont D."/>
            <person name="Makita Y."/>
            <person name="Mangenot S."/>
            <person name="Nitschke W."/>
            <person name="Ortet P."/>
            <person name="Perdrial N."/>
            <person name="Schoepp B."/>
            <person name="Siguier P."/>
            <person name="Simeonova D.D."/>
            <person name="Rouy Z."/>
            <person name="Segurens B."/>
            <person name="Turlin E."/>
            <person name="Vallenet D."/>
            <person name="van Dorsselaer A."/>
            <person name="Weiss S."/>
            <person name="Weissenbach J."/>
            <person name="Lett M.-C."/>
            <person name="Danchin A."/>
            <person name="Bertin P.N."/>
        </authorList>
    </citation>
    <scope>NUCLEOTIDE SEQUENCE [LARGE SCALE GENOMIC DNA]</scope>
    <source>
        <strain>ULPAs1</strain>
    </source>
</reference>
<name>MUTS_HERAR</name>
<sequence>MESTMSSASTNASPPSASEKHTPMMQQYLRIKAEHPETLLFYRMGDFYEVFFEDAEKASRLLGITLTQRGSSNGNPIKMAGVPFHAVDQYLSKLVKLGESIALCEQIGDPATSKGPVERKVLRVITPGTLSDSDLLPEKSEQPLLALYSTTQRKTITIGLAWLSMASGALKLMEFTTDARNAATRLKHELERIAPAEVLLPGSIDGPDSDYAFAKNTTVPDWHFDIAHGSKALHEQLKVSTLTGFGAEHLNAAIGAAGALLRYAQATQGKGLQHVRALTVETENEFIGLDAATRRNLELTETIRGQDNNSATLFSLLDHCRTAMGSRLLRHWLHHARRDQAVARARHAAINALMRTDACTGLASTLASVPDVERIATRIALQSARPRDLAGMRGGLQQLPSLRAYVSMCNQDADAPLLKTIHDALATPSECLDLVERAIALEPAAMVRDGGVIARGFDAELDELRGLSENAGQFLVDLETRERTRTGINNLRVEYNKVHGFYIEVTHGQTDKVPDDYRRRQTLKNAERYITPELKAFEDKALSAQERALAREKYLYDQVLQQMAQHIGTLQNIAHALAQLDTLVALAEHALRHNWCAPQLIAEPTIAIEQGRHPVVENHIERFIANDCLLNNESRLLLITGPNMGGKSTYMRQVALITLLAYVGSFVPATSATIGPIDRIFTRIGAADDLAGGRSTFMVEMTESAAILNGATENSLVLMDEVGRGTSTFDGLALAWAIARHLIDSTRSFTLFATHYFELTQLPEVHPSAANVHLSAVEHKDSIVFLHAVQAGPASQSYGLQVAQLAGVPQAVIRAARKHLATLEANSMQATPQFDLFADPDHLIPTSDVETAMAQPSALDEALADINPDALSPRDALDALYRLKELSNQHREK</sequence>
<accession>A4G717</accession>
<dbReference type="EMBL" id="CU207211">
    <property type="protein sequence ID" value="CAL62304.2"/>
    <property type="molecule type" value="Genomic_DNA"/>
</dbReference>
<dbReference type="SMR" id="A4G717"/>
<dbReference type="STRING" id="204773.HEAR2167"/>
<dbReference type="KEGG" id="har:HEAR2167"/>
<dbReference type="eggNOG" id="COG0249">
    <property type="taxonomic scope" value="Bacteria"/>
</dbReference>
<dbReference type="HOGENOM" id="CLU_002472_4_1_4"/>
<dbReference type="Proteomes" id="UP000006697">
    <property type="component" value="Chromosome"/>
</dbReference>
<dbReference type="GO" id="GO:0005829">
    <property type="term" value="C:cytosol"/>
    <property type="evidence" value="ECO:0007669"/>
    <property type="project" value="TreeGrafter"/>
</dbReference>
<dbReference type="GO" id="GO:0005524">
    <property type="term" value="F:ATP binding"/>
    <property type="evidence" value="ECO:0007669"/>
    <property type="project" value="UniProtKB-UniRule"/>
</dbReference>
<dbReference type="GO" id="GO:0140664">
    <property type="term" value="F:ATP-dependent DNA damage sensor activity"/>
    <property type="evidence" value="ECO:0007669"/>
    <property type="project" value="InterPro"/>
</dbReference>
<dbReference type="GO" id="GO:0003684">
    <property type="term" value="F:damaged DNA binding"/>
    <property type="evidence" value="ECO:0007669"/>
    <property type="project" value="UniProtKB-UniRule"/>
</dbReference>
<dbReference type="GO" id="GO:0030983">
    <property type="term" value="F:mismatched DNA binding"/>
    <property type="evidence" value="ECO:0007669"/>
    <property type="project" value="InterPro"/>
</dbReference>
<dbReference type="GO" id="GO:0006298">
    <property type="term" value="P:mismatch repair"/>
    <property type="evidence" value="ECO:0007669"/>
    <property type="project" value="UniProtKB-UniRule"/>
</dbReference>
<dbReference type="CDD" id="cd03284">
    <property type="entry name" value="ABC_MutS1"/>
    <property type="match status" value="1"/>
</dbReference>
<dbReference type="FunFam" id="3.40.1170.10:FF:000001">
    <property type="entry name" value="DNA mismatch repair protein MutS"/>
    <property type="match status" value="1"/>
</dbReference>
<dbReference type="FunFam" id="3.40.50.300:FF:000870">
    <property type="entry name" value="MutS protein homolog 4"/>
    <property type="match status" value="1"/>
</dbReference>
<dbReference type="Gene3D" id="1.10.1420.10">
    <property type="match status" value="2"/>
</dbReference>
<dbReference type="Gene3D" id="6.10.140.430">
    <property type="match status" value="1"/>
</dbReference>
<dbReference type="Gene3D" id="3.40.1170.10">
    <property type="entry name" value="DNA repair protein MutS, domain I"/>
    <property type="match status" value="1"/>
</dbReference>
<dbReference type="Gene3D" id="3.30.420.110">
    <property type="entry name" value="MutS, connector domain"/>
    <property type="match status" value="1"/>
</dbReference>
<dbReference type="Gene3D" id="3.40.50.300">
    <property type="entry name" value="P-loop containing nucleotide triphosphate hydrolases"/>
    <property type="match status" value="1"/>
</dbReference>
<dbReference type="HAMAP" id="MF_00096">
    <property type="entry name" value="MutS"/>
    <property type="match status" value="1"/>
</dbReference>
<dbReference type="InterPro" id="IPR005748">
    <property type="entry name" value="DNA_mismatch_repair_MutS"/>
</dbReference>
<dbReference type="InterPro" id="IPR007695">
    <property type="entry name" value="DNA_mismatch_repair_MutS-lik_N"/>
</dbReference>
<dbReference type="InterPro" id="IPR017261">
    <property type="entry name" value="DNA_mismatch_repair_MutS/MSH"/>
</dbReference>
<dbReference type="InterPro" id="IPR000432">
    <property type="entry name" value="DNA_mismatch_repair_MutS_C"/>
</dbReference>
<dbReference type="InterPro" id="IPR007861">
    <property type="entry name" value="DNA_mismatch_repair_MutS_clamp"/>
</dbReference>
<dbReference type="InterPro" id="IPR007696">
    <property type="entry name" value="DNA_mismatch_repair_MutS_core"/>
</dbReference>
<dbReference type="InterPro" id="IPR016151">
    <property type="entry name" value="DNA_mismatch_repair_MutS_N"/>
</dbReference>
<dbReference type="InterPro" id="IPR036187">
    <property type="entry name" value="DNA_mismatch_repair_MutS_sf"/>
</dbReference>
<dbReference type="InterPro" id="IPR007860">
    <property type="entry name" value="DNA_mmatch_repair_MutS_con_dom"/>
</dbReference>
<dbReference type="InterPro" id="IPR045076">
    <property type="entry name" value="MutS"/>
</dbReference>
<dbReference type="InterPro" id="IPR036678">
    <property type="entry name" value="MutS_con_dom_sf"/>
</dbReference>
<dbReference type="InterPro" id="IPR027417">
    <property type="entry name" value="P-loop_NTPase"/>
</dbReference>
<dbReference type="NCBIfam" id="TIGR01070">
    <property type="entry name" value="mutS1"/>
    <property type="match status" value="1"/>
</dbReference>
<dbReference type="NCBIfam" id="NF003810">
    <property type="entry name" value="PRK05399.1"/>
    <property type="match status" value="1"/>
</dbReference>
<dbReference type="PANTHER" id="PTHR11361:SF34">
    <property type="entry name" value="DNA MISMATCH REPAIR PROTEIN MSH1, MITOCHONDRIAL"/>
    <property type="match status" value="1"/>
</dbReference>
<dbReference type="PANTHER" id="PTHR11361">
    <property type="entry name" value="DNA MISMATCH REPAIR PROTEIN MUTS FAMILY MEMBER"/>
    <property type="match status" value="1"/>
</dbReference>
<dbReference type="Pfam" id="PF01624">
    <property type="entry name" value="MutS_I"/>
    <property type="match status" value="1"/>
</dbReference>
<dbReference type="Pfam" id="PF05188">
    <property type="entry name" value="MutS_II"/>
    <property type="match status" value="1"/>
</dbReference>
<dbReference type="Pfam" id="PF05192">
    <property type="entry name" value="MutS_III"/>
    <property type="match status" value="1"/>
</dbReference>
<dbReference type="Pfam" id="PF05190">
    <property type="entry name" value="MutS_IV"/>
    <property type="match status" value="1"/>
</dbReference>
<dbReference type="Pfam" id="PF00488">
    <property type="entry name" value="MutS_V"/>
    <property type="match status" value="1"/>
</dbReference>
<dbReference type="PIRSF" id="PIRSF037677">
    <property type="entry name" value="DNA_mis_repair_Msh6"/>
    <property type="match status" value="1"/>
</dbReference>
<dbReference type="SMART" id="SM00534">
    <property type="entry name" value="MUTSac"/>
    <property type="match status" value="1"/>
</dbReference>
<dbReference type="SMART" id="SM00533">
    <property type="entry name" value="MUTSd"/>
    <property type="match status" value="1"/>
</dbReference>
<dbReference type="SUPFAM" id="SSF55271">
    <property type="entry name" value="DNA repair protein MutS, domain I"/>
    <property type="match status" value="1"/>
</dbReference>
<dbReference type="SUPFAM" id="SSF53150">
    <property type="entry name" value="DNA repair protein MutS, domain II"/>
    <property type="match status" value="1"/>
</dbReference>
<dbReference type="SUPFAM" id="SSF48334">
    <property type="entry name" value="DNA repair protein MutS, domain III"/>
    <property type="match status" value="1"/>
</dbReference>
<dbReference type="SUPFAM" id="SSF52540">
    <property type="entry name" value="P-loop containing nucleoside triphosphate hydrolases"/>
    <property type="match status" value="1"/>
</dbReference>
<dbReference type="PROSITE" id="PS00486">
    <property type="entry name" value="DNA_MISMATCH_REPAIR_2"/>
    <property type="match status" value="1"/>
</dbReference>
<protein>
    <recommendedName>
        <fullName evidence="1">DNA mismatch repair protein MutS</fullName>
    </recommendedName>
</protein>
<comment type="function">
    <text evidence="1">This protein is involved in the repair of mismatches in DNA. It is possible that it carries out the mismatch recognition step. This protein has a weak ATPase activity.</text>
</comment>
<comment type="similarity">
    <text evidence="1">Belongs to the DNA mismatch repair MutS family.</text>
</comment>
<organism>
    <name type="scientific">Herminiimonas arsenicoxydans</name>
    <dbReference type="NCBI Taxonomy" id="204773"/>
    <lineage>
        <taxon>Bacteria</taxon>
        <taxon>Pseudomonadati</taxon>
        <taxon>Pseudomonadota</taxon>
        <taxon>Betaproteobacteria</taxon>
        <taxon>Burkholderiales</taxon>
        <taxon>Oxalobacteraceae</taxon>
        <taxon>Herminiimonas</taxon>
    </lineage>
</organism>
<gene>
    <name evidence="1" type="primary">mutS</name>
    <name type="ordered locus">HEAR2167</name>
</gene>
<evidence type="ECO:0000255" key="1">
    <source>
        <dbReference type="HAMAP-Rule" id="MF_00096"/>
    </source>
</evidence>
<evidence type="ECO:0000256" key="2">
    <source>
        <dbReference type="SAM" id="MobiDB-lite"/>
    </source>
</evidence>
<feature type="chain" id="PRO_0000335167" description="DNA mismatch repair protein MutS">
    <location>
        <begin position="1"/>
        <end position="893"/>
    </location>
</feature>
<feature type="region of interest" description="Disordered" evidence="2">
    <location>
        <begin position="1"/>
        <end position="22"/>
    </location>
</feature>
<feature type="compositionally biased region" description="Low complexity" evidence="2">
    <location>
        <begin position="1"/>
        <end position="17"/>
    </location>
</feature>
<feature type="binding site" evidence="1">
    <location>
        <begin position="641"/>
        <end position="648"/>
    </location>
    <ligand>
        <name>ATP</name>
        <dbReference type="ChEBI" id="CHEBI:30616"/>
    </ligand>
</feature>